<reference evidence="6" key="1">
    <citation type="submission" date="2005-07" db="EMBL/GenBank/DDBJ databases">
        <authorList>
            <consortium name="NIH - Xenopus Gene Collection (XGC) project"/>
        </authorList>
    </citation>
    <scope>NUCLEOTIDE SEQUENCE [LARGE SCALE MRNA]</scope>
    <source>
        <tissue evidence="6">Oocyte</tissue>
    </source>
</reference>
<reference evidence="5" key="2">
    <citation type="journal article" date="2005" name="J. Cell Sci.">
        <title>Functional contribution of Pds5 to cohesin-mediated cohesion in human cells and Xenopus egg extracts.</title>
        <authorList>
            <person name="Losada A."/>
            <person name="Yokochi T."/>
            <person name="Hirano T."/>
        </authorList>
    </citation>
    <scope>FUNCTION</scope>
    <scope>INTERACTION WITH CHROMATIN AND THE COHESIN COMPLEX</scope>
</reference>
<dbReference type="EMBL" id="BC098992">
    <property type="protein sequence ID" value="AAH98992.1"/>
    <property type="molecule type" value="mRNA"/>
</dbReference>
<dbReference type="RefSeq" id="NP_001090063.1">
    <property type="nucleotide sequence ID" value="NM_001096594.1"/>
</dbReference>
<dbReference type="SMR" id="Q4KLU7"/>
<dbReference type="BioGRID" id="592918">
    <property type="interactions" value="5"/>
</dbReference>
<dbReference type="DNASU" id="735137"/>
<dbReference type="GeneID" id="735137"/>
<dbReference type="KEGG" id="xla:735137"/>
<dbReference type="AGR" id="Xenbase:XB-GENE-5812802"/>
<dbReference type="CTD" id="735137"/>
<dbReference type="Xenbase" id="XB-GENE-5812802">
    <property type="gene designation" value="pds5a.S"/>
</dbReference>
<dbReference type="OrthoDB" id="200660at2759"/>
<dbReference type="Proteomes" id="UP000186698">
    <property type="component" value="Chromosome 1S"/>
</dbReference>
<dbReference type="Bgee" id="735137">
    <property type="expression patterns" value="Expressed in egg cell and 19 other cell types or tissues"/>
</dbReference>
<dbReference type="GO" id="GO:0000785">
    <property type="term" value="C:chromatin"/>
    <property type="evidence" value="ECO:0000318"/>
    <property type="project" value="GO_Central"/>
</dbReference>
<dbReference type="GO" id="GO:0005634">
    <property type="term" value="C:nucleus"/>
    <property type="evidence" value="ECO:0000318"/>
    <property type="project" value="GO_Central"/>
</dbReference>
<dbReference type="GO" id="GO:0051301">
    <property type="term" value="P:cell division"/>
    <property type="evidence" value="ECO:0007669"/>
    <property type="project" value="UniProtKB-KW"/>
</dbReference>
<dbReference type="GO" id="GO:0006281">
    <property type="term" value="P:DNA repair"/>
    <property type="evidence" value="ECO:0000318"/>
    <property type="project" value="GO_Central"/>
</dbReference>
<dbReference type="GO" id="GO:0007064">
    <property type="term" value="P:mitotic sister chromatid cohesion"/>
    <property type="evidence" value="ECO:0000318"/>
    <property type="project" value="GO_Central"/>
</dbReference>
<dbReference type="GO" id="GO:0008156">
    <property type="term" value="P:negative regulation of DNA replication"/>
    <property type="evidence" value="ECO:0000250"/>
    <property type="project" value="UniProtKB"/>
</dbReference>
<dbReference type="CDD" id="cd19953">
    <property type="entry name" value="PDS5"/>
    <property type="match status" value="1"/>
</dbReference>
<dbReference type="FunFam" id="1.25.10.10:FF:001146">
    <property type="entry name" value="PDS5 cohesin associated factor B"/>
    <property type="match status" value="1"/>
</dbReference>
<dbReference type="FunFam" id="1.25.10.10:FF:000064">
    <property type="entry name" value="Sister chromatid cohesion protein PDS5 homolog A"/>
    <property type="match status" value="1"/>
</dbReference>
<dbReference type="Gene3D" id="1.25.10.10">
    <property type="entry name" value="Leucine-rich Repeat Variant"/>
    <property type="match status" value="2"/>
</dbReference>
<dbReference type="InterPro" id="IPR011989">
    <property type="entry name" value="ARM-like"/>
</dbReference>
<dbReference type="InterPro" id="IPR016024">
    <property type="entry name" value="ARM-type_fold"/>
</dbReference>
<dbReference type="InterPro" id="IPR039776">
    <property type="entry name" value="Pds5"/>
</dbReference>
<dbReference type="PANTHER" id="PTHR12663">
    <property type="entry name" value="ANDROGEN INDUCED INHIBITOR OF PROLIFERATION AS3 / PDS5-RELATED"/>
    <property type="match status" value="1"/>
</dbReference>
<dbReference type="PANTHER" id="PTHR12663:SF2">
    <property type="entry name" value="SISTER CHROMATID COHESION PROTEIN PDS5 HOMOLOG A"/>
    <property type="match status" value="1"/>
</dbReference>
<dbReference type="Pfam" id="PF20168">
    <property type="entry name" value="PDS5"/>
    <property type="match status" value="1"/>
</dbReference>
<dbReference type="SUPFAM" id="SSF48371">
    <property type="entry name" value="ARM repeat"/>
    <property type="match status" value="1"/>
</dbReference>
<name>PD5AB_XENLA</name>
<accession>Q4KLU7</accession>
<sequence length="1323" mass="149527">MEFPTQPKLVDVKTIIYPPGVKEITDKISNDEVVKRLKMVVKTFMDMDQDSEEEKQQYLPLALHLSSDFFLRNPNKDVRLLVACCLADIFRIYAPEAPYTSHDKLKEIFLFITRQLKGLEDTKSPQFNRYFYLLENLAWVKSYNICFELEDCNEIFIQLFKTLFSVINNSHNQKVQMHMLDLMSSITMEGDGVTQEQLDSILINLISAHKNLNKQAFDLAKVLLKRTAQTIEPCIANFFNQVLVLGKSSVSDLSEHVFDLIQELFAIDPHLLLSVMPQLEFKLKSNDGEERLAVVRLLAKLFGSKDSDLATQNRPLWQCFLGRFNDIHVPVRLESVKFASHCLMNHPDLAKDLTEFLKVRSHDPEEAIRHDVIVTIITAAKKDLFLVNDQLLGFVRERTLDKRWRVRKEAMMGLAQLYKKYCLHGEGGKDAAEKVSWIKDKLLHIYYQNSIDDKLLVEKIFAQQLVPHNLETEERMKCLYYLYASLDPNAVKALNEMWKCQNMLRSHVRELLDLHKQPTSEANTTAMFAKLMTVAKNLPDPGKAQDFVKKFNQVLGEDEKLRSQLEVLISPSCSCKQADVCVRDIARKVANPKQPTNPFLEMVKFLLERIAPVHIDSEAISALVKLMNKSIEGTADDEEEGVSPDSAIRAGLELLKVLSFTHPTSFHSDETYESLLQCLRMEDDKVAEAAIQIFRNTGHRIETDLPQIRSALIPILHQKAKRGTPHQAKQAVHCIHSIFSNKEVQLAQIFEPLSRSLNADVPEQLVTPLVSLGHISMLAPDQFASPMKSVVANFIVKDLLMNDRSNGDKNGKLWCPDEEVSPEVLAKGQAIKLLVRWLLGMKNNQSKSANSTLRLLSAMLVSEGDLTEQKRISKSDMSRLRLAAGAAIMKLAQEPCYHEIITPEQFQLCALVINDECYQVRQIFAQKLHKALVKLQLPLEYMAIFALCAKDPVKERRAHARQCLLKNISIRREYIKQNPVSNEKLLSLLPEYVVPYMIHLLAHDPDFTKPQDIDQLRDIKECLWFMLEVLMTKNENNSHAFMKKLCENIKQTRDAQAPDDPKANEKLFTVCDVALCVVYNKSAPCHSESSKDPVLPLTFFTQPDKDFSSKSYITDEARNLLLTGKPKPMTVLGMVNKPLNATGRRPYSRSTGSEISNNVSINSESDASVANRQSSEVPEIGVSENDENPVRLISVPPAKTETVKNKEVNLDQTAPSNTGTERGKKRSAASAGAENIRKESEEKKVDNISATPTPKPRRGRPPKSESQGSAAKNDETSKPSGRGRKRAAANQESSGAQEAANAKVPKQDSTAKKTAQRQIDLHR</sequence>
<protein>
    <recommendedName>
        <fullName>Sister chromatid cohesion protein PDS5 homolog A-B</fullName>
    </recommendedName>
</protein>
<keyword id="KW-0131">Cell cycle</keyword>
<keyword id="KW-0132">Cell division</keyword>
<keyword id="KW-0498">Mitosis</keyword>
<keyword id="KW-0539">Nucleus</keyword>
<keyword id="KW-1185">Reference proteome</keyword>
<keyword id="KW-0677">Repeat</keyword>
<comment type="function">
    <text evidence="4">May regulate sister chromatid cohesion during mitosis and couple it to DNA replication.</text>
</comment>
<comment type="subunit">
    <text evidence="4">Interacts with the cohesin complex. Binds chromatin in a cohesin-dependent manner.</text>
</comment>
<comment type="subcellular location">
    <subcellularLocation>
        <location evidence="1">Nucleus</location>
    </subcellularLocation>
</comment>
<comment type="miscellaneous">
    <text evidence="4">Chromosomes assembled in the absence of pds5a and aprin/pds5b proteins have a mild defect in centromere cohesion in vitro.</text>
</comment>
<feature type="chain" id="PRO_0000299067" description="Sister chromatid cohesion protein PDS5 homolog A-B">
    <location>
        <begin position="1"/>
        <end position="1323"/>
    </location>
</feature>
<feature type="repeat" description="HEAT" evidence="2">
    <location>
        <begin position="385"/>
        <end position="421"/>
    </location>
</feature>
<feature type="region of interest" description="Disordered" evidence="3">
    <location>
        <begin position="1138"/>
        <end position="1323"/>
    </location>
</feature>
<feature type="compositionally biased region" description="Low complexity" evidence="3">
    <location>
        <begin position="1153"/>
        <end position="1165"/>
    </location>
</feature>
<feature type="compositionally biased region" description="Polar residues" evidence="3">
    <location>
        <begin position="1166"/>
        <end position="1176"/>
    </location>
</feature>
<feature type="compositionally biased region" description="Polar residues" evidence="3">
    <location>
        <begin position="1210"/>
        <end position="1220"/>
    </location>
</feature>
<feature type="compositionally biased region" description="Basic and acidic residues" evidence="3">
    <location>
        <begin position="1235"/>
        <end position="1246"/>
    </location>
</feature>
<proteinExistence type="evidence at protein level"/>
<gene>
    <name type="primary">pds5a-b</name>
</gene>
<evidence type="ECO:0000250" key="1">
    <source>
        <dbReference type="UniProtKB" id="Q29RF7"/>
    </source>
</evidence>
<evidence type="ECO:0000255" key="2"/>
<evidence type="ECO:0000256" key="3">
    <source>
        <dbReference type="SAM" id="MobiDB-lite"/>
    </source>
</evidence>
<evidence type="ECO:0000269" key="4">
    <source>
    </source>
</evidence>
<evidence type="ECO:0000305" key="5"/>
<evidence type="ECO:0000312" key="6">
    <source>
        <dbReference type="EMBL" id="AAH98992.1"/>
    </source>
</evidence>
<organism>
    <name type="scientific">Xenopus laevis</name>
    <name type="common">African clawed frog</name>
    <dbReference type="NCBI Taxonomy" id="8355"/>
    <lineage>
        <taxon>Eukaryota</taxon>
        <taxon>Metazoa</taxon>
        <taxon>Chordata</taxon>
        <taxon>Craniata</taxon>
        <taxon>Vertebrata</taxon>
        <taxon>Euteleostomi</taxon>
        <taxon>Amphibia</taxon>
        <taxon>Batrachia</taxon>
        <taxon>Anura</taxon>
        <taxon>Pipoidea</taxon>
        <taxon>Pipidae</taxon>
        <taxon>Xenopodinae</taxon>
        <taxon>Xenopus</taxon>
        <taxon>Xenopus</taxon>
    </lineage>
</organism>